<comment type="function">
    <text evidence="1">Catalyzes the anti-1,4-elimination of the C-3 phosphate and the C-6 proR hydrogen from 5-enolpyruvylshikimate-3-phosphate (EPSP) to yield chorismate, which is the branch point compound that serves as the starting substrate for the three terminal pathways of aromatic amino acid biosynthesis. This reaction introduces a second double bond into the aromatic ring system.</text>
</comment>
<comment type="catalytic activity">
    <reaction evidence="1">
        <text>5-O-(1-carboxyvinyl)-3-phosphoshikimate = chorismate + phosphate</text>
        <dbReference type="Rhea" id="RHEA:21020"/>
        <dbReference type="ChEBI" id="CHEBI:29748"/>
        <dbReference type="ChEBI" id="CHEBI:43474"/>
        <dbReference type="ChEBI" id="CHEBI:57701"/>
        <dbReference type="EC" id="4.2.3.5"/>
    </reaction>
</comment>
<comment type="cofactor">
    <cofactor evidence="1">
        <name>FMNH2</name>
        <dbReference type="ChEBI" id="CHEBI:57618"/>
    </cofactor>
    <text evidence="1">Reduced FMN (FMNH(2)).</text>
</comment>
<comment type="pathway">
    <text evidence="1">Metabolic intermediate biosynthesis; chorismate biosynthesis; chorismate from D-erythrose 4-phosphate and phosphoenolpyruvate: step 7/7.</text>
</comment>
<comment type="subunit">
    <text evidence="1">Homotetramer.</text>
</comment>
<comment type="similarity">
    <text evidence="1">Belongs to the chorismate synthase family.</text>
</comment>
<evidence type="ECO:0000255" key="1">
    <source>
        <dbReference type="HAMAP-Rule" id="MF_00300"/>
    </source>
</evidence>
<gene>
    <name evidence="1" type="primary">aroC</name>
    <name type="ordered locus">MGAS10270_Spy0680</name>
</gene>
<dbReference type="EC" id="4.2.3.5" evidence="1"/>
<dbReference type="EMBL" id="CP000260">
    <property type="protein sequence ID" value="ABF33745.1"/>
    <property type="molecule type" value="Genomic_DNA"/>
</dbReference>
<dbReference type="SMR" id="Q1JHJ1"/>
<dbReference type="KEGG" id="sph:MGAS10270_Spy0680"/>
<dbReference type="HOGENOM" id="CLU_034547_2_0_9"/>
<dbReference type="UniPathway" id="UPA00053">
    <property type="reaction ID" value="UER00090"/>
</dbReference>
<dbReference type="Proteomes" id="UP000002436">
    <property type="component" value="Chromosome"/>
</dbReference>
<dbReference type="GO" id="GO:0005829">
    <property type="term" value="C:cytosol"/>
    <property type="evidence" value="ECO:0007669"/>
    <property type="project" value="TreeGrafter"/>
</dbReference>
<dbReference type="GO" id="GO:0004107">
    <property type="term" value="F:chorismate synthase activity"/>
    <property type="evidence" value="ECO:0007669"/>
    <property type="project" value="UniProtKB-UniRule"/>
</dbReference>
<dbReference type="GO" id="GO:0010181">
    <property type="term" value="F:FMN binding"/>
    <property type="evidence" value="ECO:0007669"/>
    <property type="project" value="TreeGrafter"/>
</dbReference>
<dbReference type="GO" id="GO:0008652">
    <property type="term" value="P:amino acid biosynthetic process"/>
    <property type="evidence" value="ECO:0007669"/>
    <property type="project" value="UniProtKB-KW"/>
</dbReference>
<dbReference type="GO" id="GO:0009073">
    <property type="term" value="P:aromatic amino acid family biosynthetic process"/>
    <property type="evidence" value="ECO:0007669"/>
    <property type="project" value="UniProtKB-KW"/>
</dbReference>
<dbReference type="GO" id="GO:0009423">
    <property type="term" value="P:chorismate biosynthetic process"/>
    <property type="evidence" value="ECO:0007669"/>
    <property type="project" value="UniProtKB-UniRule"/>
</dbReference>
<dbReference type="CDD" id="cd07304">
    <property type="entry name" value="Chorismate_synthase"/>
    <property type="match status" value="1"/>
</dbReference>
<dbReference type="FunFam" id="3.60.150.10:FF:000002">
    <property type="entry name" value="Chorismate synthase"/>
    <property type="match status" value="1"/>
</dbReference>
<dbReference type="Gene3D" id="3.60.150.10">
    <property type="entry name" value="Chorismate synthase AroC"/>
    <property type="match status" value="1"/>
</dbReference>
<dbReference type="HAMAP" id="MF_00300">
    <property type="entry name" value="Chorismate_synth"/>
    <property type="match status" value="1"/>
</dbReference>
<dbReference type="InterPro" id="IPR000453">
    <property type="entry name" value="Chorismate_synth"/>
</dbReference>
<dbReference type="InterPro" id="IPR035904">
    <property type="entry name" value="Chorismate_synth_AroC_sf"/>
</dbReference>
<dbReference type="InterPro" id="IPR020541">
    <property type="entry name" value="Chorismate_synthase_CS"/>
</dbReference>
<dbReference type="NCBIfam" id="TIGR00033">
    <property type="entry name" value="aroC"/>
    <property type="match status" value="1"/>
</dbReference>
<dbReference type="NCBIfam" id="NF003793">
    <property type="entry name" value="PRK05382.1"/>
    <property type="match status" value="1"/>
</dbReference>
<dbReference type="PANTHER" id="PTHR21085">
    <property type="entry name" value="CHORISMATE SYNTHASE"/>
    <property type="match status" value="1"/>
</dbReference>
<dbReference type="PANTHER" id="PTHR21085:SF0">
    <property type="entry name" value="CHORISMATE SYNTHASE"/>
    <property type="match status" value="1"/>
</dbReference>
<dbReference type="Pfam" id="PF01264">
    <property type="entry name" value="Chorismate_synt"/>
    <property type="match status" value="1"/>
</dbReference>
<dbReference type="PIRSF" id="PIRSF001456">
    <property type="entry name" value="Chorismate_synth"/>
    <property type="match status" value="1"/>
</dbReference>
<dbReference type="SUPFAM" id="SSF103263">
    <property type="entry name" value="Chorismate synthase, AroC"/>
    <property type="match status" value="1"/>
</dbReference>
<dbReference type="PROSITE" id="PS00787">
    <property type="entry name" value="CHORISMATE_SYNTHASE_1"/>
    <property type="match status" value="1"/>
</dbReference>
<dbReference type="PROSITE" id="PS00788">
    <property type="entry name" value="CHORISMATE_SYNTHASE_2"/>
    <property type="match status" value="1"/>
</dbReference>
<dbReference type="PROSITE" id="PS00789">
    <property type="entry name" value="CHORISMATE_SYNTHASE_3"/>
    <property type="match status" value="1"/>
</dbReference>
<accession>Q1JHJ1</accession>
<reference key="1">
    <citation type="journal article" date="2006" name="Proc. Natl. Acad. Sci. U.S.A.">
        <title>Molecular genetic anatomy of inter- and intraserotype variation in the human bacterial pathogen group A Streptococcus.</title>
        <authorList>
            <person name="Beres S.B."/>
            <person name="Richter E.W."/>
            <person name="Nagiec M.J."/>
            <person name="Sumby P."/>
            <person name="Porcella S.F."/>
            <person name="DeLeo F.R."/>
            <person name="Musser J.M."/>
        </authorList>
    </citation>
    <scope>NUCLEOTIDE SEQUENCE [LARGE SCALE GENOMIC DNA]</scope>
    <source>
        <strain>MGAS10270</strain>
    </source>
</reference>
<proteinExistence type="inferred from homology"/>
<sequence>MRYLTAGESHGPSLTAIIEGIPAGLTLHPADIDHELQRRQGGYGRGARMSIETDQVQISSGVRHGKTTGAPITLTVINKDHQKWLDVMAVGDIEETLKLKRRVKHPRPGHADLVGGIKYHFNDLRDALERSSARETTMRVAVGAVAKRILAELGVDMLHHILIFGGITITIPSKLSFRELQERALHSELSIVNPKQEEEIKTYIDKIKKEGDTIGGIIETIVQGVPAGLGSYVQWDKKLDAKLAQAVLSINAFKGVEFGVGFDMGFQKGSQVMDEITWTPTQGYGRQTNHLGGFEGGMTTGQLLVVKGVMKPIPTLYKPLMSVDIDSHEPYKATVERSDPTALPAAGVIMENVVATVLAKEILETFSSTTMSELQKAFSDYRAYVKQF</sequence>
<protein>
    <recommendedName>
        <fullName evidence="1">Chorismate synthase</fullName>
        <shortName evidence="1">CS</shortName>
        <ecNumber evidence="1">4.2.3.5</ecNumber>
    </recommendedName>
    <alternativeName>
        <fullName evidence="1">5-enolpyruvylshikimate-3-phosphate phospholyase</fullName>
    </alternativeName>
</protein>
<organism>
    <name type="scientific">Streptococcus pyogenes serotype M2 (strain MGAS10270)</name>
    <dbReference type="NCBI Taxonomy" id="370552"/>
    <lineage>
        <taxon>Bacteria</taxon>
        <taxon>Bacillati</taxon>
        <taxon>Bacillota</taxon>
        <taxon>Bacilli</taxon>
        <taxon>Lactobacillales</taxon>
        <taxon>Streptococcaceae</taxon>
        <taxon>Streptococcus</taxon>
    </lineage>
</organism>
<keyword id="KW-0028">Amino-acid biosynthesis</keyword>
<keyword id="KW-0057">Aromatic amino acid biosynthesis</keyword>
<keyword id="KW-0274">FAD</keyword>
<keyword id="KW-0285">Flavoprotein</keyword>
<keyword id="KW-0288">FMN</keyword>
<keyword id="KW-0456">Lyase</keyword>
<keyword id="KW-0521">NADP</keyword>
<name>AROC_STRPD</name>
<feature type="chain" id="PRO_0000256347" description="Chorismate synthase">
    <location>
        <begin position="1"/>
        <end position="388"/>
    </location>
</feature>
<feature type="binding site" evidence="1">
    <location>
        <position position="39"/>
    </location>
    <ligand>
        <name>NADP(+)</name>
        <dbReference type="ChEBI" id="CHEBI:58349"/>
    </ligand>
</feature>
<feature type="binding site" evidence="1">
    <location>
        <position position="45"/>
    </location>
    <ligand>
        <name>NADP(+)</name>
        <dbReference type="ChEBI" id="CHEBI:58349"/>
    </ligand>
</feature>
<feature type="binding site" evidence="1">
    <location>
        <begin position="130"/>
        <end position="132"/>
    </location>
    <ligand>
        <name>FMN</name>
        <dbReference type="ChEBI" id="CHEBI:58210"/>
    </ligand>
</feature>
<feature type="binding site" evidence="1">
    <location>
        <begin position="251"/>
        <end position="252"/>
    </location>
    <ligand>
        <name>FMN</name>
        <dbReference type="ChEBI" id="CHEBI:58210"/>
    </ligand>
</feature>
<feature type="binding site" evidence="1">
    <location>
        <position position="296"/>
    </location>
    <ligand>
        <name>FMN</name>
        <dbReference type="ChEBI" id="CHEBI:58210"/>
    </ligand>
</feature>
<feature type="binding site" evidence="1">
    <location>
        <begin position="311"/>
        <end position="315"/>
    </location>
    <ligand>
        <name>FMN</name>
        <dbReference type="ChEBI" id="CHEBI:58210"/>
    </ligand>
</feature>
<feature type="binding site" evidence="1">
    <location>
        <position position="337"/>
    </location>
    <ligand>
        <name>FMN</name>
        <dbReference type="ChEBI" id="CHEBI:58210"/>
    </ligand>
</feature>